<name>RS20_PSYCK</name>
<gene>
    <name evidence="1" type="primary">rpsT</name>
    <name type="ordered locus">Pcryo_1667</name>
</gene>
<evidence type="ECO:0000255" key="1">
    <source>
        <dbReference type="HAMAP-Rule" id="MF_00500"/>
    </source>
</evidence>
<evidence type="ECO:0000256" key="2">
    <source>
        <dbReference type="SAM" id="MobiDB-lite"/>
    </source>
</evidence>
<evidence type="ECO:0000305" key="3"/>
<feature type="chain" id="PRO_0000260131" description="Small ribosomal subunit protein bS20">
    <location>
        <begin position="1"/>
        <end position="88"/>
    </location>
</feature>
<feature type="region of interest" description="Disordered" evidence="2">
    <location>
        <begin position="1"/>
        <end position="26"/>
    </location>
</feature>
<feature type="compositionally biased region" description="Basic residues" evidence="2">
    <location>
        <begin position="7"/>
        <end position="19"/>
    </location>
</feature>
<comment type="function">
    <text evidence="1">Binds directly to 16S ribosomal RNA.</text>
</comment>
<comment type="similarity">
    <text evidence="1">Belongs to the bacterial ribosomal protein bS20 family.</text>
</comment>
<sequence length="88" mass="9927">MANTAQARKRARQNTKRRQNSASQRSMVRTYLKRVDAAIAAKDYDAATEAYKKAVPVLDRMADKGILHKNKAARRKSRLNKTIKGLLA</sequence>
<organism>
    <name type="scientific">Psychrobacter cryohalolentis (strain ATCC BAA-1226 / DSM 17306 / VKM B-2378 / K5)</name>
    <dbReference type="NCBI Taxonomy" id="335284"/>
    <lineage>
        <taxon>Bacteria</taxon>
        <taxon>Pseudomonadati</taxon>
        <taxon>Pseudomonadota</taxon>
        <taxon>Gammaproteobacteria</taxon>
        <taxon>Moraxellales</taxon>
        <taxon>Moraxellaceae</taxon>
        <taxon>Psychrobacter</taxon>
    </lineage>
</organism>
<protein>
    <recommendedName>
        <fullName evidence="1">Small ribosomal subunit protein bS20</fullName>
    </recommendedName>
    <alternativeName>
        <fullName evidence="3">30S ribosomal protein S20</fullName>
    </alternativeName>
</protein>
<dbReference type="EMBL" id="CP000323">
    <property type="protein sequence ID" value="ABE75444.1"/>
    <property type="molecule type" value="Genomic_DNA"/>
</dbReference>
<dbReference type="RefSeq" id="WP_011513993.1">
    <property type="nucleotide sequence ID" value="NC_007969.1"/>
</dbReference>
<dbReference type="SMR" id="Q1QA59"/>
<dbReference type="STRING" id="335284.Pcryo_1667"/>
<dbReference type="KEGG" id="pcr:Pcryo_1667"/>
<dbReference type="eggNOG" id="COG0268">
    <property type="taxonomic scope" value="Bacteria"/>
</dbReference>
<dbReference type="HOGENOM" id="CLU_160655_4_0_6"/>
<dbReference type="Proteomes" id="UP000002425">
    <property type="component" value="Chromosome"/>
</dbReference>
<dbReference type="GO" id="GO:0005829">
    <property type="term" value="C:cytosol"/>
    <property type="evidence" value="ECO:0007669"/>
    <property type="project" value="TreeGrafter"/>
</dbReference>
<dbReference type="GO" id="GO:0015935">
    <property type="term" value="C:small ribosomal subunit"/>
    <property type="evidence" value="ECO:0007669"/>
    <property type="project" value="TreeGrafter"/>
</dbReference>
<dbReference type="GO" id="GO:0070181">
    <property type="term" value="F:small ribosomal subunit rRNA binding"/>
    <property type="evidence" value="ECO:0007669"/>
    <property type="project" value="TreeGrafter"/>
</dbReference>
<dbReference type="GO" id="GO:0003735">
    <property type="term" value="F:structural constituent of ribosome"/>
    <property type="evidence" value="ECO:0007669"/>
    <property type="project" value="InterPro"/>
</dbReference>
<dbReference type="GO" id="GO:0006412">
    <property type="term" value="P:translation"/>
    <property type="evidence" value="ECO:0007669"/>
    <property type="project" value="UniProtKB-UniRule"/>
</dbReference>
<dbReference type="FunFam" id="1.20.58.110:FF:000001">
    <property type="entry name" value="30S ribosomal protein S20"/>
    <property type="match status" value="1"/>
</dbReference>
<dbReference type="Gene3D" id="1.20.58.110">
    <property type="entry name" value="Ribosomal protein S20"/>
    <property type="match status" value="1"/>
</dbReference>
<dbReference type="HAMAP" id="MF_00500">
    <property type="entry name" value="Ribosomal_bS20"/>
    <property type="match status" value="1"/>
</dbReference>
<dbReference type="InterPro" id="IPR002583">
    <property type="entry name" value="Ribosomal_bS20"/>
</dbReference>
<dbReference type="InterPro" id="IPR036510">
    <property type="entry name" value="Ribosomal_bS20_sf"/>
</dbReference>
<dbReference type="NCBIfam" id="TIGR00029">
    <property type="entry name" value="S20"/>
    <property type="match status" value="1"/>
</dbReference>
<dbReference type="PANTHER" id="PTHR33398">
    <property type="entry name" value="30S RIBOSOMAL PROTEIN S20"/>
    <property type="match status" value="1"/>
</dbReference>
<dbReference type="PANTHER" id="PTHR33398:SF1">
    <property type="entry name" value="SMALL RIBOSOMAL SUBUNIT PROTEIN BS20C"/>
    <property type="match status" value="1"/>
</dbReference>
<dbReference type="Pfam" id="PF01649">
    <property type="entry name" value="Ribosomal_S20p"/>
    <property type="match status" value="1"/>
</dbReference>
<dbReference type="SUPFAM" id="SSF46992">
    <property type="entry name" value="Ribosomal protein S20"/>
    <property type="match status" value="1"/>
</dbReference>
<keyword id="KW-0687">Ribonucleoprotein</keyword>
<keyword id="KW-0689">Ribosomal protein</keyword>
<keyword id="KW-0694">RNA-binding</keyword>
<keyword id="KW-0699">rRNA-binding</keyword>
<proteinExistence type="inferred from homology"/>
<accession>Q1QA59</accession>
<reference key="1">
    <citation type="submission" date="2006-03" db="EMBL/GenBank/DDBJ databases">
        <title>Complete sequence of chromosome of Psychrobacter cryohalolentis K5.</title>
        <authorList>
            <consortium name="US DOE Joint Genome Institute"/>
            <person name="Copeland A."/>
            <person name="Lucas S."/>
            <person name="Lapidus A."/>
            <person name="Barry K."/>
            <person name="Detter J.C."/>
            <person name="Glavina T."/>
            <person name="Hammon N."/>
            <person name="Israni S."/>
            <person name="Dalin E."/>
            <person name="Tice H."/>
            <person name="Pitluck S."/>
            <person name="Brettin T."/>
            <person name="Bruce D."/>
            <person name="Han C."/>
            <person name="Tapia R."/>
            <person name="Sims D.R."/>
            <person name="Gilna P."/>
            <person name="Schmutz J."/>
            <person name="Larimer F."/>
            <person name="Land M."/>
            <person name="Hauser L."/>
            <person name="Kyrpides N."/>
            <person name="Kim E."/>
            <person name="Richardson P."/>
        </authorList>
    </citation>
    <scope>NUCLEOTIDE SEQUENCE [LARGE SCALE GENOMIC DNA]</scope>
    <source>
        <strain>ATCC BAA-1226 / DSM 17306 / VKM B-2378 / K5</strain>
    </source>
</reference>